<protein>
    <recommendedName>
        <fullName evidence="7">MOB kinase activator-like 1A</fullName>
    </recommendedName>
    <alternativeName>
        <fullName evidence="7">Mob1 homolog 1A</fullName>
    </alternativeName>
    <alternativeName>
        <fullName evidence="7">Mps one binder kinase activator-like 1A</fullName>
    </alternativeName>
</protein>
<proteinExistence type="evidence at protein level"/>
<organism>
    <name type="scientific">Arabidopsis thaliana</name>
    <name type="common">Mouse-ear cress</name>
    <dbReference type="NCBI Taxonomy" id="3702"/>
    <lineage>
        <taxon>Eukaryota</taxon>
        <taxon>Viridiplantae</taxon>
        <taxon>Streptophyta</taxon>
        <taxon>Embryophyta</taxon>
        <taxon>Tracheophyta</taxon>
        <taxon>Spermatophyta</taxon>
        <taxon>Magnoliopsida</taxon>
        <taxon>eudicotyledons</taxon>
        <taxon>Gunneridae</taxon>
        <taxon>Pentapetalae</taxon>
        <taxon>rosids</taxon>
        <taxon>malvids</taxon>
        <taxon>Brassicales</taxon>
        <taxon>Brassicaceae</taxon>
        <taxon>Camelineae</taxon>
        <taxon>Arabidopsis</taxon>
    </lineage>
</organism>
<accession>Q9FHI1</accession>
<accession>Q56W53</accession>
<reference key="1">
    <citation type="journal article" date="1999" name="DNA Res.">
        <title>Structural analysis of Arabidopsis thaliana chromosome 5. IX. Sequence features of the regions of 1,011,550 bp covered by seventeen P1 and TAC clones.</title>
        <authorList>
            <person name="Kaneko T."/>
            <person name="Katoh T."/>
            <person name="Sato S."/>
            <person name="Nakamura Y."/>
            <person name="Asamizu E."/>
            <person name="Kotani H."/>
            <person name="Miyajima N."/>
            <person name="Tabata S."/>
        </authorList>
    </citation>
    <scope>NUCLEOTIDE SEQUENCE [LARGE SCALE GENOMIC DNA]</scope>
    <source>
        <strain>cv. Columbia</strain>
    </source>
</reference>
<reference key="2">
    <citation type="journal article" date="2017" name="Plant J.">
        <title>Araport11: a complete reannotation of the Arabidopsis thaliana reference genome.</title>
        <authorList>
            <person name="Cheng C.Y."/>
            <person name="Krishnakumar V."/>
            <person name="Chan A.P."/>
            <person name="Thibaud-Nissen F."/>
            <person name="Schobel S."/>
            <person name="Town C.D."/>
        </authorList>
    </citation>
    <scope>GENOME REANNOTATION</scope>
    <source>
        <strain>cv. Columbia</strain>
    </source>
</reference>
<reference key="3">
    <citation type="journal article" date="2003" name="Science">
        <title>Empirical analysis of transcriptional activity in the Arabidopsis genome.</title>
        <authorList>
            <person name="Yamada K."/>
            <person name="Lim J."/>
            <person name="Dale J.M."/>
            <person name="Chen H."/>
            <person name="Shinn P."/>
            <person name="Palm C.J."/>
            <person name="Southwick A.M."/>
            <person name="Wu H.C."/>
            <person name="Kim C.J."/>
            <person name="Nguyen M."/>
            <person name="Pham P.K."/>
            <person name="Cheuk R.F."/>
            <person name="Karlin-Newmann G."/>
            <person name="Liu S.X."/>
            <person name="Lam B."/>
            <person name="Sakano H."/>
            <person name="Wu T."/>
            <person name="Yu G."/>
            <person name="Miranda M."/>
            <person name="Quach H.L."/>
            <person name="Tripp M."/>
            <person name="Chang C.H."/>
            <person name="Lee J.M."/>
            <person name="Toriumi M.J."/>
            <person name="Chan M.M."/>
            <person name="Tang C.C."/>
            <person name="Onodera C.S."/>
            <person name="Deng J.M."/>
            <person name="Akiyama K."/>
            <person name="Ansari Y."/>
            <person name="Arakawa T."/>
            <person name="Banh J."/>
            <person name="Banno F."/>
            <person name="Bowser L."/>
            <person name="Brooks S.Y."/>
            <person name="Carninci P."/>
            <person name="Chao Q."/>
            <person name="Choy N."/>
            <person name="Enju A."/>
            <person name="Goldsmith A.D."/>
            <person name="Gurjal M."/>
            <person name="Hansen N.F."/>
            <person name="Hayashizaki Y."/>
            <person name="Johnson-Hopson C."/>
            <person name="Hsuan V.W."/>
            <person name="Iida K."/>
            <person name="Karnes M."/>
            <person name="Khan S."/>
            <person name="Koesema E."/>
            <person name="Ishida J."/>
            <person name="Jiang P.X."/>
            <person name="Jones T."/>
            <person name="Kawai J."/>
            <person name="Kamiya A."/>
            <person name="Meyers C."/>
            <person name="Nakajima M."/>
            <person name="Narusaka M."/>
            <person name="Seki M."/>
            <person name="Sakurai T."/>
            <person name="Satou M."/>
            <person name="Tamse R."/>
            <person name="Vaysberg M."/>
            <person name="Wallender E.K."/>
            <person name="Wong C."/>
            <person name="Yamamura Y."/>
            <person name="Yuan S."/>
            <person name="Shinozaki K."/>
            <person name="Davis R.W."/>
            <person name="Theologis A."/>
            <person name="Ecker J.R."/>
        </authorList>
    </citation>
    <scope>NUCLEOTIDE SEQUENCE [LARGE SCALE MRNA]</scope>
    <source>
        <strain>cv. Columbia</strain>
    </source>
</reference>
<reference key="4">
    <citation type="submission" date="2002-03" db="EMBL/GenBank/DDBJ databases">
        <title>Full-length cDNA from Arabidopsis thaliana.</title>
        <authorList>
            <person name="Brover V.V."/>
            <person name="Troukhan M.E."/>
            <person name="Alexandrov N.A."/>
            <person name="Lu Y.-P."/>
            <person name="Flavell R.B."/>
            <person name="Feldmann K.A."/>
        </authorList>
    </citation>
    <scope>NUCLEOTIDE SEQUENCE [LARGE SCALE MRNA]</scope>
</reference>
<reference key="5">
    <citation type="submission" date="2005-03" db="EMBL/GenBank/DDBJ databases">
        <title>Large-scale analysis of RIKEN Arabidopsis full-length (RAFL) cDNAs.</title>
        <authorList>
            <person name="Totoki Y."/>
            <person name="Seki M."/>
            <person name="Ishida J."/>
            <person name="Nakajima M."/>
            <person name="Enju A."/>
            <person name="Kamiya A."/>
            <person name="Narusaka M."/>
            <person name="Shin-i T."/>
            <person name="Nakagawa M."/>
            <person name="Sakamoto N."/>
            <person name="Oishi K."/>
            <person name="Kohara Y."/>
            <person name="Kobayashi M."/>
            <person name="Toyoda A."/>
            <person name="Sakaki Y."/>
            <person name="Sakurai T."/>
            <person name="Iida K."/>
            <person name="Akiyama K."/>
            <person name="Satou M."/>
            <person name="Toyoda T."/>
            <person name="Konagaya A."/>
            <person name="Carninci P."/>
            <person name="Kawai J."/>
            <person name="Hayashizaki Y."/>
            <person name="Shinozaki K."/>
        </authorList>
    </citation>
    <scope>NUCLEOTIDE SEQUENCE [LARGE SCALE MRNA] OF 121-215</scope>
    <source>
        <strain>cv. Columbia</strain>
    </source>
</reference>
<reference key="6">
    <citation type="journal article" date="2004" name="Plant J.">
        <title>Molecular dissection of plant cytokinesis and phragmoplast structure: a survey of GFP-tagged proteins.</title>
        <authorList>
            <person name="Van Damme D."/>
            <person name="Bouget F.-Y."/>
            <person name="Van Poucke K."/>
            <person name="Inze D."/>
            <person name="Geelen D."/>
        </authorList>
    </citation>
    <scope>SUBCELLULAR LOCATION</scope>
</reference>
<reference key="7">
    <citation type="journal article" date="2007" name="Evol. Bioinform. Online">
        <title>Characterization and evolution of the cell cycle-associated mob domain-containing proteins in eukaryotes.</title>
        <authorList>
            <person name="Vitulo N."/>
            <person name="Vezzi A."/>
            <person name="Galla G."/>
            <person name="Citterio S."/>
            <person name="Marino G."/>
            <person name="Ruperti B."/>
            <person name="Zermiani M."/>
            <person name="Albertini E."/>
            <person name="Valle G."/>
            <person name="Barcaccia G."/>
        </authorList>
    </citation>
    <scope>GENE FAMILY</scope>
    <scope>NOMENCLATURE</scope>
</reference>
<reference key="8">
    <citation type="journal article" date="2011" name="Gene">
        <title>Sporophytic and gametophytic functions of the cell cycle-associated Mob1 gene in Arabidopsis thaliana L.</title>
        <authorList>
            <person name="Galla G."/>
            <person name="Zenoni S."/>
            <person name="Marconi G."/>
            <person name="Marino G."/>
            <person name="Botton A."/>
            <person name="Pinosa F."/>
            <person name="Citterio S."/>
            <person name="Ruperti B."/>
            <person name="Palme K."/>
            <person name="Albertini E."/>
            <person name="Pezzotti M."/>
            <person name="Mau M."/>
            <person name="Sharbel T.F."/>
            <person name="De Storme N."/>
            <person name="Geelen D."/>
            <person name="Barcaccia G."/>
        </authorList>
    </citation>
    <scope>FUNCTION</scope>
    <scope>SUBCELLULAR LOCATION</scope>
    <scope>TISSUE SPECIFICITY</scope>
</reference>
<reference key="9">
    <citation type="journal article" date="2013" name="Ann. Bot.">
        <title>The Arabidopsis thaliana Mob1A gene is required for organ growth and correct tissue patterning of the root tip.</title>
        <authorList>
            <person name="Pinosa F."/>
            <person name="Begheldo M."/>
            <person name="Pasternak T."/>
            <person name="Zermiani M."/>
            <person name="Paponov I.A."/>
            <person name="Dovzhenko A."/>
            <person name="Barcaccia G."/>
            <person name="Ruperti B."/>
            <person name="Palme K."/>
        </authorList>
    </citation>
    <scope>FUNCTION</scope>
    <scope>TISSUE SPECIFICITY</scope>
    <scope>DISRUPTION PHENOTYPE</scope>
</reference>
<reference key="10">
    <citation type="journal article" date="2016" name="J. Exp. Bot.">
        <title>The Hippo/STE20 homolog SIK1 interacts with MOB1 to regulate cell proliferation and cell expansion in Arabidopsis.</title>
        <authorList>
            <person name="Xiong J."/>
            <person name="Cui X."/>
            <person name="Yuan X."/>
            <person name="Yu X."/>
            <person name="Sun J."/>
            <person name="Gong Q."/>
        </authorList>
    </citation>
    <scope>FUNCTION</scope>
    <scope>DISRUPTION PHENOTYPE</scope>
    <scope>INTERACTION WITH SIK1</scope>
    <scope>SUBCELLULAR LOCATION</scope>
    <source>
        <strain>cv. Columbia</strain>
    </source>
</reference>
<comment type="function">
    <text evidence="4 5 6">Plays a key role in regulation of cell expansion and cell division (PubMed:26685188). Required for proper plant development, the correct patterning of the root meristem and the control of root growth (PubMed:24201137). Involved in both sporogenesis and gametogenesis (PubMed:21641974).</text>
</comment>
<comment type="subunit">
    <text evidence="6">Interacts with SIK1 at the plasma membrane and in the nucleus.</text>
</comment>
<comment type="subcellular location">
    <subcellularLocation>
        <location evidence="3 4 6">Nucleus</location>
    </subcellularLocation>
    <subcellularLocation>
        <location evidence="6">Cell membrane</location>
    </subcellularLocation>
    <subcellularLocation>
        <location evidence="6">Vacuole membrane</location>
    </subcellularLocation>
    <text evidence="6">Observed at the plasma membrane and in the nucleus when associated with SIK1.</text>
</comment>
<comment type="tissue specificity">
    <text evidence="4 5">Constitutively expressed (PubMed:21641974). In 3- to 4-day-old seedlings, expression is high in the shoot apical meristem and along the vasculature in cotyledons, hypocotyls and roots. At the root tip, expression is detected in columella and lateral root cap cells as well as in the stem cell niche around the quiescent center (QC). The levels of expression decrease progressively in the meristematic zone from the root tip towards the base of the root, becoming stronger again in the elongation zone. In flowers, expression appears localized in ovules and pollen (PubMed:24201137).</text>
</comment>
<comment type="disruption phenotype">
    <text evidence="5 6">Exhibits severe defects in the growth of vegetative organs and in seed setting capacity: displays a reduction in the rosette size and number of leaves, a reduction of siliques size with high proportion of aborted ovules, a short root length with reduction of the meristem size, of the number of cortical cells and of the size of the elongation zone with root tips showing a distorted cellular pattern (PubMed:24201137). Also exhibits a higher sensitivity to abscissic acid (ABA) (PubMed:24201137). The double mutant sik1 mob1a is arrested at the seedling stage (PubMed:26685188).</text>
</comment>
<comment type="miscellaneous">
    <text evidence="4">RNAi plants show a reduced radial expansion of the inflorescence stem, a reduced elongation zone of the primary root, defects during sporogenesis and gametogenesis, and a reduced fertility.</text>
</comment>
<comment type="similarity">
    <text evidence="8">Belongs to the MOB1/phocein family.</text>
</comment>
<keyword id="KW-0131">Cell cycle</keyword>
<keyword id="KW-0132">Cell division</keyword>
<keyword id="KW-1003">Cell membrane</keyword>
<keyword id="KW-0472">Membrane</keyword>
<keyword id="KW-0479">Metal-binding</keyword>
<keyword id="KW-0539">Nucleus</keyword>
<keyword id="KW-1185">Reference proteome</keyword>
<keyword id="KW-0926">Vacuole</keyword>
<keyword id="KW-0862">Zinc</keyword>
<evidence type="ECO:0000250" key="1">
    <source>
        <dbReference type="UniProtKB" id="P40484"/>
    </source>
</evidence>
<evidence type="ECO:0000256" key="2">
    <source>
        <dbReference type="SAM" id="MobiDB-lite"/>
    </source>
</evidence>
<evidence type="ECO:0000269" key="3">
    <source>
    </source>
</evidence>
<evidence type="ECO:0000269" key="4">
    <source>
    </source>
</evidence>
<evidence type="ECO:0000269" key="5">
    <source>
    </source>
</evidence>
<evidence type="ECO:0000269" key="6">
    <source>
    </source>
</evidence>
<evidence type="ECO:0000303" key="7">
    <source>
    </source>
</evidence>
<evidence type="ECO:0000305" key="8"/>
<evidence type="ECO:0000312" key="9">
    <source>
        <dbReference type="Araport" id="AT5G45550"/>
    </source>
</evidence>
<evidence type="ECO:0000312" key="10">
    <source>
        <dbReference type="EMBL" id="BAB09183.1"/>
    </source>
</evidence>
<dbReference type="EMBL" id="AB018113">
    <property type="protein sequence ID" value="BAB09183.1"/>
    <property type="molecule type" value="Genomic_DNA"/>
</dbReference>
<dbReference type="EMBL" id="CP002688">
    <property type="protein sequence ID" value="AED95267.1"/>
    <property type="molecule type" value="Genomic_DNA"/>
</dbReference>
<dbReference type="EMBL" id="AY045864">
    <property type="protein sequence ID" value="AAK76538.1"/>
    <property type="molecule type" value="mRNA"/>
</dbReference>
<dbReference type="EMBL" id="AY117158">
    <property type="protein sequence ID" value="AAM51233.1"/>
    <property type="molecule type" value="mRNA"/>
</dbReference>
<dbReference type="EMBL" id="AY086730">
    <property type="protein sequence ID" value="AAM63781.1"/>
    <property type="molecule type" value="mRNA"/>
</dbReference>
<dbReference type="EMBL" id="AK222194">
    <property type="protein sequence ID" value="BAD95338.1"/>
    <property type="molecule type" value="mRNA"/>
</dbReference>
<dbReference type="RefSeq" id="NP_199368.1">
    <property type="nucleotide sequence ID" value="NM_123923.6"/>
</dbReference>
<dbReference type="SMR" id="Q9FHI1"/>
<dbReference type="FunCoup" id="Q9FHI1">
    <property type="interactions" value="3902"/>
</dbReference>
<dbReference type="STRING" id="3702.Q9FHI1"/>
<dbReference type="iPTMnet" id="Q9FHI1"/>
<dbReference type="PaxDb" id="3702-AT5G45550.1"/>
<dbReference type="ProteomicsDB" id="238260"/>
<dbReference type="EnsemblPlants" id="AT5G45550.1">
    <property type="protein sequence ID" value="AT5G45550.1"/>
    <property type="gene ID" value="AT5G45550"/>
</dbReference>
<dbReference type="GeneID" id="834591"/>
<dbReference type="Gramene" id="AT5G45550.1">
    <property type="protein sequence ID" value="AT5G45550.1"/>
    <property type="gene ID" value="AT5G45550"/>
</dbReference>
<dbReference type="KEGG" id="ath:AT5G45550"/>
<dbReference type="Araport" id="AT5G45550"/>
<dbReference type="TAIR" id="AT5G45550">
    <property type="gene designation" value="MOB1-LIKE"/>
</dbReference>
<dbReference type="eggNOG" id="KOG0440">
    <property type="taxonomic scope" value="Eukaryota"/>
</dbReference>
<dbReference type="HOGENOM" id="CLU_038321_3_2_1"/>
<dbReference type="InParanoid" id="Q9FHI1"/>
<dbReference type="OMA" id="VDNEQMF"/>
<dbReference type="OrthoDB" id="8170117at2759"/>
<dbReference type="PhylomeDB" id="Q9FHI1"/>
<dbReference type="PRO" id="PR:Q9FHI1"/>
<dbReference type="Proteomes" id="UP000006548">
    <property type="component" value="Chromosome 5"/>
</dbReference>
<dbReference type="ExpressionAtlas" id="Q9FHI1">
    <property type="expression patterns" value="baseline and differential"/>
</dbReference>
<dbReference type="GO" id="GO:0005737">
    <property type="term" value="C:cytoplasm"/>
    <property type="evidence" value="ECO:0000314"/>
    <property type="project" value="TAIR"/>
</dbReference>
<dbReference type="GO" id="GO:0005769">
    <property type="term" value="C:early endosome"/>
    <property type="evidence" value="ECO:0000314"/>
    <property type="project" value="TAIR"/>
</dbReference>
<dbReference type="GO" id="GO:0005634">
    <property type="term" value="C:nucleus"/>
    <property type="evidence" value="ECO:0000314"/>
    <property type="project" value="UniProtKB"/>
</dbReference>
<dbReference type="GO" id="GO:0009705">
    <property type="term" value="C:plant-type vacuole membrane"/>
    <property type="evidence" value="ECO:0000314"/>
    <property type="project" value="TAIR"/>
</dbReference>
<dbReference type="GO" id="GO:0005886">
    <property type="term" value="C:plasma membrane"/>
    <property type="evidence" value="ECO:0000314"/>
    <property type="project" value="TAIR"/>
</dbReference>
<dbReference type="GO" id="GO:0005802">
    <property type="term" value="C:trans-Golgi network"/>
    <property type="evidence" value="ECO:0000314"/>
    <property type="project" value="TAIR"/>
</dbReference>
<dbReference type="GO" id="GO:0046872">
    <property type="term" value="F:metal ion binding"/>
    <property type="evidence" value="ECO:0007669"/>
    <property type="project" value="UniProtKB-KW"/>
</dbReference>
<dbReference type="GO" id="GO:0009734">
    <property type="term" value="P:auxin-activated signaling pathway"/>
    <property type="evidence" value="ECO:0000316"/>
    <property type="project" value="TAIR"/>
</dbReference>
<dbReference type="GO" id="GO:0051301">
    <property type="term" value="P:cell division"/>
    <property type="evidence" value="ECO:0000315"/>
    <property type="project" value="UniProtKB"/>
</dbReference>
<dbReference type="GO" id="GO:0008283">
    <property type="term" value="P:cell population proliferation"/>
    <property type="evidence" value="ECO:0000316"/>
    <property type="project" value="TAIR"/>
</dbReference>
<dbReference type="GO" id="GO:0009553">
    <property type="term" value="P:embryo sac development"/>
    <property type="evidence" value="ECO:0000315"/>
    <property type="project" value="TAIR"/>
</dbReference>
<dbReference type="GO" id="GO:0048229">
    <property type="term" value="P:gametophyte development"/>
    <property type="evidence" value="ECO:0000315"/>
    <property type="project" value="UniProtKB"/>
</dbReference>
<dbReference type="GO" id="GO:0009554">
    <property type="term" value="P:megasporogenesis"/>
    <property type="evidence" value="ECO:0000315"/>
    <property type="project" value="TAIR"/>
</dbReference>
<dbReference type="GO" id="GO:0009556">
    <property type="term" value="P:microsporogenesis"/>
    <property type="evidence" value="ECO:0000315"/>
    <property type="project" value="TAIR"/>
</dbReference>
<dbReference type="GO" id="GO:0035265">
    <property type="term" value="P:organ growth"/>
    <property type="evidence" value="ECO:0000315"/>
    <property type="project" value="UniProtKB"/>
</dbReference>
<dbReference type="GO" id="GO:0080141">
    <property type="term" value="P:regulation of jasmonic acid biosynthetic process"/>
    <property type="evidence" value="ECO:0000316"/>
    <property type="project" value="TAIR"/>
</dbReference>
<dbReference type="GO" id="GO:0048364">
    <property type="term" value="P:root development"/>
    <property type="evidence" value="ECO:0000315"/>
    <property type="project" value="UniProtKB"/>
</dbReference>
<dbReference type="GO" id="GO:0010449">
    <property type="term" value="P:root meristem growth"/>
    <property type="evidence" value="ECO:0000315"/>
    <property type="project" value="UniProtKB"/>
</dbReference>
<dbReference type="FunFam" id="1.20.140.30:FF:000001">
    <property type="entry name" value="MOB kinase activator 1A"/>
    <property type="match status" value="1"/>
</dbReference>
<dbReference type="Gene3D" id="1.20.140.30">
    <property type="entry name" value="MOB kinase activator"/>
    <property type="match status" value="1"/>
</dbReference>
<dbReference type="InterPro" id="IPR005301">
    <property type="entry name" value="MOB_kinase_act_fam"/>
</dbReference>
<dbReference type="InterPro" id="IPR036703">
    <property type="entry name" value="MOB_kinase_act_sf"/>
</dbReference>
<dbReference type="PANTHER" id="PTHR22599">
    <property type="entry name" value="MPS ONE BINDER KINASE ACTIVATOR-LIKE MOB"/>
    <property type="match status" value="1"/>
</dbReference>
<dbReference type="Pfam" id="PF03637">
    <property type="entry name" value="Mob1_phocein"/>
    <property type="match status" value="1"/>
</dbReference>
<dbReference type="SMART" id="SM01388">
    <property type="entry name" value="Mob1_phocein"/>
    <property type="match status" value="1"/>
</dbReference>
<dbReference type="SUPFAM" id="SSF101152">
    <property type="entry name" value="Mob1/phocein"/>
    <property type="match status" value="1"/>
</dbReference>
<gene>
    <name evidence="7" type="primary">MOB1A</name>
    <name evidence="9" type="ordered locus">At5g45550</name>
    <name evidence="10" type="ORF">MFC19.22</name>
</gene>
<sequence>MSLFGLGRNQKTFRPKKSAPSGSKGAQLRKHIDATLGSGNLREAVRLPPGEDANEWLAVNTVDFFNQVNLLYGTLTEFCTPDNCPTMTAGPKYEYRWADGVQIKKPIEVSAPKYVEYLMDWIETQLDDETLFPQRLGAPFPQNFKDVVKTIFKRLFRVYAHIYHSHFQKIVSLKEEAHLNTCFKHFILFTHEFGLIDKKELAPLQELIESIISPY</sequence>
<feature type="chain" id="PRO_0000432416" description="MOB kinase activator-like 1A">
    <location>
        <begin position="1"/>
        <end position="215"/>
    </location>
</feature>
<feature type="region of interest" description="Disordered" evidence="2">
    <location>
        <begin position="1"/>
        <end position="27"/>
    </location>
</feature>
<feature type="binding site" evidence="1">
    <location>
        <position position="79"/>
    </location>
    <ligand>
        <name>Zn(2+)</name>
        <dbReference type="ChEBI" id="CHEBI:29105"/>
    </ligand>
</feature>
<feature type="binding site" evidence="1">
    <location>
        <position position="84"/>
    </location>
    <ligand>
        <name>Zn(2+)</name>
        <dbReference type="ChEBI" id="CHEBI:29105"/>
    </ligand>
</feature>
<feature type="binding site" evidence="1">
    <location>
        <position position="161"/>
    </location>
    <ligand>
        <name>Zn(2+)</name>
        <dbReference type="ChEBI" id="CHEBI:29105"/>
    </ligand>
</feature>
<feature type="binding site" evidence="1">
    <location>
        <position position="166"/>
    </location>
    <ligand>
        <name>Zn(2+)</name>
        <dbReference type="ChEBI" id="CHEBI:29105"/>
    </ligand>
</feature>
<name>MOB1A_ARATH</name>